<reference key="1">
    <citation type="journal article" date="1989" name="J. Biol. Chem.">
        <title>Complete structure of the mouse mast cell receptor for IgE (Fc epsilon RI) and surface expression of chimeric receptors (rat-mouse-human) on transfected cells.</title>
        <authorList>
            <person name="Ra C."/>
            <person name="Jouvin M.H.E."/>
            <person name="Kinet J.-P."/>
        </authorList>
    </citation>
    <scope>NUCLEOTIDE SEQUENCE [MRNA]</scope>
</reference>
<reference key="2">
    <citation type="submission" date="1999-10" db="EMBL/GenBank/DDBJ databases">
        <title>The genomic structure of the allergy associated Fc receptor beta subunit and its high content of SINEs.</title>
        <authorList>
            <person name="Hiraoka S."/>
            <person name="Watanabe M."/>
            <person name="Takagaki Y."/>
            <person name="Fujita-Suzuki K."/>
            <person name="Shinohara N."/>
            <person name="Okumura K."/>
            <person name="Ra C."/>
        </authorList>
    </citation>
    <scope>NUCLEOTIDE SEQUENCE [GENOMIC DNA]</scope>
    <source>
        <strain>129</strain>
    </source>
</reference>
<reference key="3">
    <citation type="journal article" date="2005" name="J. Immunol.">
        <title>Positive and negative regulation of mast cell activation by Lyn via the FcepsilonRI.</title>
        <authorList>
            <person name="Xiao W."/>
            <person name="Nishimoto H."/>
            <person name="Hong H."/>
            <person name="Kitaura J."/>
            <person name="Nunomura S."/>
            <person name="Maeda-Yamamoto M."/>
            <person name="Kawakami Y."/>
            <person name="Lowell C.A."/>
            <person name="Ra C."/>
            <person name="Kawakami T."/>
        </authorList>
    </citation>
    <scope>PHOSPHORYLATION</scope>
    <scope>INTERACTION WITH LYN</scope>
</reference>
<reference key="4">
    <citation type="journal article" date="2007" name="J. Immunol.">
        <title>Quantitative time-resolved phosphoproteomic analysis of mast cell signaling.</title>
        <authorList>
            <person name="Cao L."/>
            <person name="Yu K."/>
            <person name="Banh C."/>
            <person name="Nguyen V."/>
            <person name="Ritz A."/>
            <person name="Raphael B.J."/>
            <person name="Kawakami Y."/>
            <person name="Kawakami T."/>
            <person name="Salomon A.R."/>
        </authorList>
    </citation>
    <scope>PHOSPHORYLATION [LARGE SCALE ANALYSIS] AT TYR-210; TYR-216; SER-217 AND TYR-220</scope>
    <scope>IDENTIFICATION BY MASS SPECTROMETRY [LARGE SCALE ANALYSIS]</scope>
    <source>
        <tissue>Mast cell</tissue>
    </source>
</reference>
<reference key="5">
    <citation type="journal article" date="2009" name="Mol. Cell. Biol.">
        <title>Contributions of F-BAR and SH2 domains of Fes protein tyrosine kinase for coupling to the FcepsilonRI pathway in mast cells.</title>
        <authorList>
            <person name="McPherson V.A."/>
            <person name="Everingham S."/>
            <person name="Karisch R."/>
            <person name="Smith J.A."/>
            <person name="Udell C.M."/>
            <person name="Zheng J."/>
            <person name="Jia Z."/>
            <person name="Craig A.W."/>
        </authorList>
    </citation>
    <scope>FUNCTION</scope>
    <scope>INTERACTION WITH FES/FPS</scope>
</reference>
<gene>
    <name type="primary">Ms4a2</name>
    <name type="synonym">Fce1b</name>
    <name type="synonym">Fcer1b</name>
    <name type="synonym">Ms4a1</name>
</gene>
<sequence>MDTENRSRADLALPNPQESSSAPDIELLEASPAKAAPPKQTWRTFLKKELEFLGATQILVGLICLCFGTIVCSVLYVSDFDEEVLLLYKLGYPFWGAVLFVLSGFLSIISERKNTLYLVRGSLGANIVSSIAAGTGIAMLILNLTNNFAYMNNCKNVTEDDGCFVASFTTELVLMMLFLTILAFCSAVLFTIYRIGQELESKKVPDDRLYEELNVYSPIYSELEDKGETSSPVDS</sequence>
<feature type="chain" id="PRO_0000158630" description="High affinity immunoglobulin epsilon receptor subunit beta">
    <location>
        <begin position="1"/>
        <end position="235"/>
    </location>
</feature>
<feature type="topological domain" description="Cytoplasmic" evidence="2">
    <location>
        <begin position="1"/>
        <end position="51"/>
    </location>
</feature>
<feature type="transmembrane region" description="Helical" evidence="2">
    <location>
        <begin position="52"/>
        <end position="71"/>
    </location>
</feature>
<feature type="topological domain" description="Extracellular" evidence="2">
    <location>
        <begin position="72"/>
        <end position="89"/>
    </location>
</feature>
<feature type="transmembrane region" description="Helical" evidence="2">
    <location>
        <begin position="90"/>
        <end position="109"/>
    </location>
</feature>
<feature type="topological domain" description="Cytoplasmic" evidence="2">
    <location>
        <begin position="110"/>
        <end position="122"/>
    </location>
</feature>
<feature type="transmembrane region" description="Helical" evidence="2">
    <location>
        <begin position="123"/>
        <end position="142"/>
    </location>
</feature>
<feature type="topological domain" description="Extracellular" evidence="2">
    <location>
        <begin position="143"/>
        <end position="171"/>
    </location>
</feature>
<feature type="transmembrane region" description="Helical" evidence="2">
    <location>
        <begin position="172"/>
        <end position="191"/>
    </location>
</feature>
<feature type="topological domain" description="Cytoplasmic" evidence="2">
    <location>
        <begin position="192"/>
        <end position="235"/>
    </location>
</feature>
<feature type="region of interest" description="Disordered" evidence="3">
    <location>
        <begin position="1"/>
        <end position="23"/>
    </location>
</feature>
<feature type="modified residue" description="Phosphotyrosine" evidence="7">
    <location>
        <position position="210"/>
    </location>
</feature>
<feature type="modified residue" description="Phosphotyrosine" evidence="7">
    <location>
        <position position="216"/>
    </location>
</feature>
<feature type="modified residue" description="Phosphoserine" evidence="7">
    <location>
        <position position="217"/>
    </location>
</feature>
<feature type="modified residue" description="Phosphotyrosine" evidence="7">
    <location>
        <position position="220"/>
    </location>
</feature>
<proteinExistence type="evidence at protein level"/>
<comment type="function">
    <text evidence="5">High affinity receptor that binds to the Fc region of immunoglobulins epsilon. Aggregation of FCER1 by multivalent antigens is required for the full mast cell response, including the release of preformed mediators (such as histamine) by degranulation and de novo production of lipid mediators and cytokines. Also mediates the secretion of important lymphokines. Binding of allergen to receptor-bound IgE leads to cell activation and the release of mediators responsible for the manifestations of allergy.</text>
</comment>
<comment type="subunit">
    <text evidence="1 4 5">Tetramer of an alpha chain, a beta chain, and two disulfide linked gamma chains. Binds LILRB1. Interacts with FGR (By similarity). Interacts with FGR and FES/FPS. Interacts with LYN.</text>
</comment>
<comment type="subcellular location">
    <subcellularLocation>
        <location>Membrane</location>
        <topology>Multi-pass membrane protein</topology>
    </subcellularLocation>
</comment>
<comment type="PTM">
    <text evidence="4">Phosphorylated on tyrosine residues by LYN.</text>
</comment>
<comment type="similarity">
    <text evidence="6">Belongs to the MS4A family.</text>
</comment>
<accession>P20490</accession>
<evidence type="ECO:0000250" key="1"/>
<evidence type="ECO:0000255" key="2"/>
<evidence type="ECO:0000256" key="3">
    <source>
        <dbReference type="SAM" id="MobiDB-lite"/>
    </source>
</evidence>
<evidence type="ECO:0000269" key="4">
    <source>
    </source>
</evidence>
<evidence type="ECO:0000269" key="5">
    <source>
    </source>
</evidence>
<evidence type="ECO:0000305" key="6"/>
<evidence type="ECO:0007744" key="7">
    <source>
    </source>
</evidence>
<keyword id="KW-0002">3D-structure</keyword>
<keyword id="KW-1015">Disulfide bond</keyword>
<keyword id="KW-0389">IgE-binding protein</keyword>
<keyword id="KW-0472">Membrane</keyword>
<keyword id="KW-0597">Phosphoprotein</keyword>
<keyword id="KW-0675">Receptor</keyword>
<keyword id="KW-1185">Reference proteome</keyword>
<keyword id="KW-0812">Transmembrane</keyword>
<keyword id="KW-1133">Transmembrane helix</keyword>
<organism>
    <name type="scientific">Mus musculus</name>
    <name type="common">Mouse</name>
    <dbReference type="NCBI Taxonomy" id="10090"/>
    <lineage>
        <taxon>Eukaryota</taxon>
        <taxon>Metazoa</taxon>
        <taxon>Chordata</taxon>
        <taxon>Craniata</taxon>
        <taxon>Vertebrata</taxon>
        <taxon>Euteleostomi</taxon>
        <taxon>Mammalia</taxon>
        <taxon>Eutheria</taxon>
        <taxon>Euarchontoglires</taxon>
        <taxon>Glires</taxon>
        <taxon>Rodentia</taxon>
        <taxon>Myomorpha</taxon>
        <taxon>Muroidea</taxon>
        <taxon>Muridae</taxon>
        <taxon>Murinae</taxon>
        <taxon>Mus</taxon>
        <taxon>Mus</taxon>
    </lineage>
</organism>
<protein>
    <recommendedName>
        <fullName>High affinity immunoglobulin epsilon receptor subunit beta</fullName>
        <shortName>FcERI</shortName>
    </recommendedName>
    <alternativeName>
        <fullName>Fc epsilon receptor I beta-chain</fullName>
    </alternativeName>
    <alternativeName>
        <fullName>IgE Fc receptor subunit beta</fullName>
    </alternativeName>
    <alternativeName>
        <fullName>Membrane-spanning 4-domains subfamily A member 2</fullName>
    </alternativeName>
</protein>
<dbReference type="EMBL" id="J05019">
    <property type="protein sequence ID" value="AAA37601.1"/>
    <property type="molecule type" value="mRNA"/>
</dbReference>
<dbReference type="EMBL" id="AB033617">
    <property type="protein sequence ID" value="BAA94839.1"/>
    <property type="molecule type" value="Genomic_DNA"/>
</dbReference>
<dbReference type="CCDS" id="CCDS29604.1"/>
<dbReference type="PIR" id="B34342">
    <property type="entry name" value="B34342"/>
</dbReference>
<dbReference type="RefSeq" id="NP_038544.1">
    <property type="nucleotide sequence ID" value="NM_013516.2"/>
</dbReference>
<dbReference type="PDB" id="8K7T">
    <property type="method" value="EM"/>
    <property type="resolution" value="3.71 A"/>
    <property type="chains" value="B=1-235"/>
</dbReference>
<dbReference type="PDB" id="8YRJ">
    <property type="method" value="EM"/>
    <property type="resolution" value="3.87 A"/>
    <property type="chains" value="B=1-235"/>
</dbReference>
<dbReference type="PDBsum" id="8K7T"/>
<dbReference type="PDBsum" id="8YRJ"/>
<dbReference type="EMDB" id="EMD-36941"/>
<dbReference type="EMDB" id="EMD-39543"/>
<dbReference type="SMR" id="P20490"/>
<dbReference type="BioGRID" id="199615">
    <property type="interactions" value="2"/>
</dbReference>
<dbReference type="FunCoup" id="P20490">
    <property type="interactions" value="295"/>
</dbReference>
<dbReference type="STRING" id="10090.ENSMUSP00000127373"/>
<dbReference type="iPTMnet" id="P20490"/>
<dbReference type="PhosphoSitePlus" id="P20490"/>
<dbReference type="PaxDb" id="10090-ENSMUSP00000127373"/>
<dbReference type="Antibodypedia" id="27859">
    <property type="antibodies" value="71 antibodies from 16 providers"/>
</dbReference>
<dbReference type="DNASU" id="14126"/>
<dbReference type="Ensembl" id="ENSMUST00000164792.8">
    <property type="protein sequence ID" value="ENSMUSP00000127373.2"/>
    <property type="gene ID" value="ENSMUSG00000024680.13"/>
</dbReference>
<dbReference type="GeneID" id="14126"/>
<dbReference type="KEGG" id="mmu:14126"/>
<dbReference type="UCSC" id="uc008gsn.2">
    <property type="organism name" value="mouse"/>
</dbReference>
<dbReference type="AGR" id="MGI:95495"/>
<dbReference type="CTD" id="2206"/>
<dbReference type="MGI" id="MGI:95495">
    <property type="gene designation" value="Ms4a2"/>
</dbReference>
<dbReference type="VEuPathDB" id="HostDB:ENSMUSG00000024680"/>
<dbReference type="eggNOG" id="ENOG502TM6F">
    <property type="taxonomic scope" value="Eukaryota"/>
</dbReference>
<dbReference type="GeneTree" id="ENSGT00940000161985"/>
<dbReference type="InParanoid" id="P20490"/>
<dbReference type="OMA" id="AYIYNCQ"/>
<dbReference type="OrthoDB" id="10071849at2759"/>
<dbReference type="PhylomeDB" id="P20490"/>
<dbReference type="TreeFam" id="TF335157"/>
<dbReference type="Reactome" id="R-MMU-2454202">
    <property type="pathway name" value="Fc epsilon receptor (FCERI) signaling"/>
</dbReference>
<dbReference type="Reactome" id="R-MMU-2730905">
    <property type="pathway name" value="Role of LAT2/NTAL/LAB on calcium mobilization"/>
</dbReference>
<dbReference type="Reactome" id="R-MMU-2871796">
    <property type="pathway name" value="FCERI mediated MAPK activation"/>
</dbReference>
<dbReference type="Reactome" id="R-MMU-2871809">
    <property type="pathway name" value="FCERI mediated Ca+2 mobilization"/>
</dbReference>
<dbReference type="Reactome" id="R-MMU-2871837">
    <property type="pathway name" value="FCERI mediated NF-kB activation"/>
</dbReference>
<dbReference type="BioGRID-ORCS" id="14126">
    <property type="hits" value="2 hits in 78 CRISPR screens"/>
</dbReference>
<dbReference type="ChiTaRS" id="Ms4a1">
    <property type="organism name" value="mouse"/>
</dbReference>
<dbReference type="PRO" id="PR:P20490"/>
<dbReference type="Proteomes" id="UP000000589">
    <property type="component" value="Chromosome 19"/>
</dbReference>
<dbReference type="RNAct" id="P20490">
    <property type="molecule type" value="protein"/>
</dbReference>
<dbReference type="Bgee" id="ENSMUSG00000024680">
    <property type="expression patterns" value="Expressed in renal corpuscle and 36 other cell types or tissues"/>
</dbReference>
<dbReference type="ExpressionAtlas" id="P20490">
    <property type="expression patterns" value="baseline and differential"/>
</dbReference>
<dbReference type="GO" id="GO:0009897">
    <property type="term" value="C:external side of plasma membrane"/>
    <property type="evidence" value="ECO:0000314"/>
    <property type="project" value="MGI"/>
</dbReference>
<dbReference type="GO" id="GO:0032998">
    <property type="term" value="C:Fc-epsilon receptor I complex"/>
    <property type="evidence" value="ECO:0000314"/>
    <property type="project" value="MGI"/>
</dbReference>
<dbReference type="GO" id="GO:0045121">
    <property type="term" value="C:membrane raft"/>
    <property type="evidence" value="ECO:0000304"/>
    <property type="project" value="MGI"/>
</dbReference>
<dbReference type="GO" id="GO:0005886">
    <property type="term" value="C:plasma membrane"/>
    <property type="evidence" value="ECO:0000314"/>
    <property type="project" value="MGI"/>
</dbReference>
<dbReference type="GO" id="GO:0019863">
    <property type="term" value="F:IgE binding"/>
    <property type="evidence" value="ECO:0007669"/>
    <property type="project" value="UniProtKB-KW"/>
</dbReference>
<dbReference type="GO" id="GO:0007166">
    <property type="term" value="P:cell surface receptor signaling pathway"/>
    <property type="evidence" value="ECO:0000314"/>
    <property type="project" value="MGI"/>
</dbReference>
<dbReference type="GO" id="GO:0006955">
    <property type="term" value="P:immune response"/>
    <property type="evidence" value="ECO:0007669"/>
    <property type="project" value="Ensembl"/>
</dbReference>
<dbReference type="GO" id="GO:0007165">
    <property type="term" value="P:signal transduction"/>
    <property type="evidence" value="ECO:0000314"/>
    <property type="project" value="MGI"/>
</dbReference>
<dbReference type="InterPro" id="IPR007237">
    <property type="entry name" value="CD20-like"/>
</dbReference>
<dbReference type="InterPro" id="IPR030417">
    <property type="entry name" value="MS4A"/>
</dbReference>
<dbReference type="PANTHER" id="PTHR23320:SF66">
    <property type="entry name" value="HIGH AFFINITY IMMUNOGLOBULIN EPSILON RECEPTOR SUBUNIT BETA"/>
    <property type="match status" value="1"/>
</dbReference>
<dbReference type="PANTHER" id="PTHR23320">
    <property type="entry name" value="MEMBRANE-SPANNING 4-DOMAINS SUBFAMILY A MS4A -RELATED"/>
    <property type="match status" value="1"/>
</dbReference>
<dbReference type="Pfam" id="PF04103">
    <property type="entry name" value="CD20"/>
    <property type="match status" value="1"/>
</dbReference>
<name>FCERB_MOUSE</name>